<gene>
    <name evidence="2" type="primary">folE</name>
    <name type="ordered locus">Hac_1087</name>
</gene>
<comment type="catalytic activity">
    <reaction evidence="2">
        <text>GTP + H2O = 7,8-dihydroneopterin 3'-triphosphate + formate + H(+)</text>
        <dbReference type="Rhea" id="RHEA:17473"/>
        <dbReference type="ChEBI" id="CHEBI:15377"/>
        <dbReference type="ChEBI" id="CHEBI:15378"/>
        <dbReference type="ChEBI" id="CHEBI:15740"/>
        <dbReference type="ChEBI" id="CHEBI:37565"/>
        <dbReference type="ChEBI" id="CHEBI:58462"/>
        <dbReference type="EC" id="3.5.4.16"/>
    </reaction>
</comment>
<comment type="pathway">
    <text evidence="2">Cofactor biosynthesis; 7,8-dihydroneopterin triphosphate biosynthesis; 7,8-dihydroneopterin triphosphate from GTP: step 1/1.</text>
</comment>
<comment type="subunit">
    <text evidence="1">Toroid-shaped homodecamer, composed of two pentamers of five dimers.</text>
</comment>
<comment type="similarity">
    <text evidence="2">Belongs to the GTP cyclohydrolase I family.</text>
</comment>
<evidence type="ECO:0000250" key="1"/>
<evidence type="ECO:0000255" key="2">
    <source>
        <dbReference type="HAMAP-Rule" id="MF_00223"/>
    </source>
</evidence>
<name>GCH1_HELAH</name>
<proteinExistence type="inferred from homology"/>
<reference key="1">
    <citation type="journal article" date="2006" name="PLoS Genet.">
        <title>Who ate whom? Adaptive Helicobacter genomic changes that accompanied a host jump from early humans to large felines.</title>
        <authorList>
            <person name="Eppinger M."/>
            <person name="Baar C."/>
            <person name="Linz B."/>
            <person name="Raddatz G."/>
            <person name="Lanz C."/>
            <person name="Keller H."/>
            <person name="Morelli G."/>
            <person name="Gressmann H."/>
            <person name="Achtman M."/>
            <person name="Schuster S.C."/>
        </authorList>
    </citation>
    <scope>NUCLEOTIDE SEQUENCE [LARGE SCALE GENOMIC DNA]</scope>
    <source>
        <strain>Sheeba</strain>
    </source>
</reference>
<protein>
    <recommendedName>
        <fullName evidence="2">GTP cyclohydrolase 1</fullName>
        <ecNumber evidence="2">3.5.4.16</ecNumber>
    </recommendedName>
    <alternativeName>
        <fullName evidence="2">GTP cyclohydrolase I</fullName>
        <shortName evidence="2">GTP-CH-I</shortName>
    </alternativeName>
</protein>
<feature type="chain" id="PRO_1000043699" description="GTP cyclohydrolase 1">
    <location>
        <begin position="1"/>
        <end position="180"/>
    </location>
</feature>
<feature type="binding site" evidence="2">
    <location>
        <position position="71"/>
    </location>
    <ligand>
        <name>Zn(2+)</name>
        <dbReference type="ChEBI" id="CHEBI:29105"/>
    </ligand>
</feature>
<feature type="binding site" evidence="2">
    <location>
        <position position="74"/>
    </location>
    <ligand>
        <name>Zn(2+)</name>
        <dbReference type="ChEBI" id="CHEBI:29105"/>
    </ligand>
</feature>
<feature type="binding site" evidence="2">
    <location>
        <position position="142"/>
    </location>
    <ligand>
        <name>Zn(2+)</name>
        <dbReference type="ChEBI" id="CHEBI:29105"/>
    </ligand>
</feature>
<dbReference type="EC" id="3.5.4.16" evidence="2"/>
<dbReference type="EMBL" id="AM260522">
    <property type="protein sequence ID" value="CAJ99851.1"/>
    <property type="molecule type" value="Genomic_DNA"/>
</dbReference>
<dbReference type="RefSeq" id="WP_011577959.1">
    <property type="nucleotide sequence ID" value="NC_008229.1"/>
</dbReference>
<dbReference type="SMR" id="Q17WX5"/>
<dbReference type="STRING" id="382638.Hac_1087"/>
<dbReference type="GeneID" id="31758448"/>
<dbReference type="KEGG" id="hac:Hac_1087"/>
<dbReference type="eggNOG" id="COG0302">
    <property type="taxonomic scope" value="Bacteria"/>
</dbReference>
<dbReference type="HOGENOM" id="CLU_049768_3_4_7"/>
<dbReference type="OrthoDB" id="9801207at2"/>
<dbReference type="BioCyc" id="HACI382638:HAC_RS04665-MONOMER"/>
<dbReference type="UniPathway" id="UPA00848">
    <property type="reaction ID" value="UER00151"/>
</dbReference>
<dbReference type="Proteomes" id="UP000000775">
    <property type="component" value="Chromosome"/>
</dbReference>
<dbReference type="GO" id="GO:0005737">
    <property type="term" value="C:cytoplasm"/>
    <property type="evidence" value="ECO:0007669"/>
    <property type="project" value="TreeGrafter"/>
</dbReference>
<dbReference type="GO" id="GO:0005525">
    <property type="term" value="F:GTP binding"/>
    <property type="evidence" value="ECO:0007669"/>
    <property type="project" value="UniProtKB-KW"/>
</dbReference>
<dbReference type="GO" id="GO:0003934">
    <property type="term" value="F:GTP cyclohydrolase I activity"/>
    <property type="evidence" value="ECO:0007669"/>
    <property type="project" value="UniProtKB-UniRule"/>
</dbReference>
<dbReference type="GO" id="GO:0008270">
    <property type="term" value="F:zinc ion binding"/>
    <property type="evidence" value="ECO:0007669"/>
    <property type="project" value="UniProtKB-UniRule"/>
</dbReference>
<dbReference type="GO" id="GO:0006730">
    <property type="term" value="P:one-carbon metabolic process"/>
    <property type="evidence" value="ECO:0007669"/>
    <property type="project" value="UniProtKB-UniRule"/>
</dbReference>
<dbReference type="GO" id="GO:0006729">
    <property type="term" value="P:tetrahydrobiopterin biosynthetic process"/>
    <property type="evidence" value="ECO:0007669"/>
    <property type="project" value="TreeGrafter"/>
</dbReference>
<dbReference type="GO" id="GO:0046654">
    <property type="term" value="P:tetrahydrofolate biosynthetic process"/>
    <property type="evidence" value="ECO:0007669"/>
    <property type="project" value="UniProtKB-UniRule"/>
</dbReference>
<dbReference type="FunFam" id="3.30.1130.10:FF:000001">
    <property type="entry name" value="GTP cyclohydrolase 1"/>
    <property type="match status" value="1"/>
</dbReference>
<dbReference type="Gene3D" id="1.10.286.10">
    <property type="match status" value="1"/>
</dbReference>
<dbReference type="Gene3D" id="3.30.1130.10">
    <property type="match status" value="1"/>
</dbReference>
<dbReference type="HAMAP" id="MF_00223">
    <property type="entry name" value="FolE"/>
    <property type="match status" value="1"/>
</dbReference>
<dbReference type="InterPro" id="IPR043133">
    <property type="entry name" value="GTP-CH-I_C/QueF"/>
</dbReference>
<dbReference type="InterPro" id="IPR043134">
    <property type="entry name" value="GTP-CH-I_N"/>
</dbReference>
<dbReference type="InterPro" id="IPR001474">
    <property type="entry name" value="GTP_CycHdrlase_I"/>
</dbReference>
<dbReference type="InterPro" id="IPR018234">
    <property type="entry name" value="GTP_CycHdrlase_I_CS"/>
</dbReference>
<dbReference type="InterPro" id="IPR020602">
    <property type="entry name" value="GTP_CycHdrlase_I_dom"/>
</dbReference>
<dbReference type="NCBIfam" id="TIGR00063">
    <property type="entry name" value="folE"/>
    <property type="match status" value="1"/>
</dbReference>
<dbReference type="NCBIfam" id="NF006825">
    <property type="entry name" value="PRK09347.1-2"/>
    <property type="match status" value="1"/>
</dbReference>
<dbReference type="NCBIfam" id="NF006826">
    <property type="entry name" value="PRK09347.1-3"/>
    <property type="match status" value="1"/>
</dbReference>
<dbReference type="PANTHER" id="PTHR11109:SF7">
    <property type="entry name" value="GTP CYCLOHYDROLASE 1"/>
    <property type="match status" value="1"/>
</dbReference>
<dbReference type="PANTHER" id="PTHR11109">
    <property type="entry name" value="GTP CYCLOHYDROLASE I"/>
    <property type="match status" value="1"/>
</dbReference>
<dbReference type="Pfam" id="PF01227">
    <property type="entry name" value="GTP_cyclohydroI"/>
    <property type="match status" value="1"/>
</dbReference>
<dbReference type="SUPFAM" id="SSF55620">
    <property type="entry name" value="Tetrahydrobiopterin biosynthesis enzymes-like"/>
    <property type="match status" value="1"/>
</dbReference>
<dbReference type="PROSITE" id="PS00860">
    <property type="entry name" value="GTP_CYCLOHYDROL_1_2"/>
    <property type="match status" value="1"/>
</dbReference>
<organism>
    <name type="scientific">Helicobacter acinonychis (strain Sheeba)</name>
    <dbReference type="NCBI Taxonomy" id="382638"/>
    <lineage>
        <taxon>Bacteria</taxon>
        <taxon>Pseudomonadati</taxon>
        <taxon>Campylobacterota</taxon>
        <taxon>Epsilonproteobacteria</taxon>
        <taxon>Campylobacterales</taxon>
        <taxon>Helicobacteraceae</taxon>
        <taxon>Helicobacter</taxon>
    </lineage>
</organism>
<sequence>MENFFNQFFENIGEDKNREGLKNTPKRVQELWNFLYKGYKEDPKVALKSAYFQGVCDEMIVAQHIEFYSTCEHHLLPFFGNISLGYIPKEKIIGISAIAKLIEIYSKRLQIQERLTTQIAETFDEIIEPRGVIVICEAKHLCMSMQGVQKQNAIIKTSALKGLFKKDPKTRAEFMQLLKS</sequence>
<keyword id="KW-0342">GTP-binding</keyword>
<keyword id="KW-0378">Hydrolase</keyword>
<keyword id="KW-0479">Metal-binding</keyword>
<keyword id="KW-0547">Nucleotide-binding</keyword>
<keyword id="KW-0554">One-carbon metabolism</keyword>
<keyword id="KW-0862">Zinc</keyword>
<accession>Q17WX5</accession>